<feature type="chain" id="PRO_0000301196" description="Sec-independent protein translocase protein TatB">
    <location>
        <begin position="1"/>
        <end position="228"/>
    </location>
</feature>
<feature type="transmembrane region" description="Helical" evidence="1">
    <location>
        <begin position="1"/>
        <end position="21"/>
    </location>
</feature>
<feature type="region of interest" description="Disordered" evidence="2">
    <location>
        <begin position="126"/>
        <end position="162"/>
    </location>
</feature>
<feature type="region of interest" description="Disordered" evidence="2">
    <location>
        <begin position="196"/>
        <end position="228"/>
    </location>
</feature>
<feature type="compositionally biased region" description="Basic residues" evidence="2">
    <location>
        <begin position="206"/>
        <end position="228"/>
    </location>
</feature>
<comment type="function">
    <text evidence="1">Part of the twin-arginine translocation (Tat) system that transports large folded proteins containing a characteristic twin-arginine motif in their signal peptide across membranes. Together with TatC, TatB is part of a receptor directly interacting with Tat signal peptides. TatB may form an oligomeric binding site that transiently accommodates folded Tat precursor proteins before their translocation.</text>
</comment>
<comment type="subunit">
    <text evidence="1">The Tat system comprises two distinct complexes: a TatABC complex, containing multiple copies of TatA, TatB and TatC subunits, and a separate TatA complex, containing only TatA subunits. Substrates initially bind to the TatABC complex, which probably triggers association of the separate TatA complex to form the active translocon.</text>
</comment>
<comment type="subcellular location">
    <subcellularLocation>
        <location evidence="1">Cell inner membrane</location>
        <topology evidence="1">Single-pass membrane protein</topology>
    </subcellularLocation>
</comment>
<comment type="similarity">
    <text evidence="1">Belongs to the TatB family.</text>
</comment>
<organism>
    <name type="scientific">Neisseria meningitidis serogroup C / serotype 2a (strain ATCC 700532 / DSM 15464 / FAM18)</name>
    <dbReference type="NCBI Taxonomy" id="272831"/>
    <lineage>
        <taxon>Bacteria</taxon>
        <taxon>Pseudomonadati</taxon>
        <taxon>Pseudomonadota</taxon>
        <taxon>Betaproteobacteria</taxon>
        <taxon>Neisseriales</taxon>
        <taxon>Neisseriaceae</taxon>
        <taxon>Neisseria</taxon>
    </lineage>
</organism>
<dbReference type="EMBL" id="AM421808">
    <property type="protein sequence ID" value="CAM09839.1"/>
    <property type="molecule type" value="Genomic_DNA"/>
</dbReference>
<dbReference type="RefSeq" id="WP_002221335.1">
    <property type="nucleotide sequence ID" value="NC_008767.1"/>
</dbReference>
<dbReference type="SMR" id="A1KSK9"/>
<dbReference type="KEGG" id="nmc:NMC0543"/>
<dbReference type="HOGENOM" id="CLU_086034_1_1_4"/>
<dbReference type="Proteomes" id="UP000002286">
    <property type="component" value="Chromosome"/>
</dbReference>
<dbReference type="GO" id="GO:0033281">
    <property type="term" value="C:TAT protein transport complex"/>
    <property type="evidence" value="ECO:0007669"/>
    <property type="project" value="UniProtKB-UniRule"/>
</dbReference>
<dbReference type="GO" id="GO:0008320">
    <property type="term" value="F:protein transmembrane transporter activity"/>
    <property type="evidence" value="ECO:0007669"/>
    <property type="project" value="UniProtKB-UniRule"/>
</dbReference>
<dbReference type="GO" id="GO:0043953">
    <property type="term" value="P:protein transport by the Tat complex"/>
    <property type="evidence" value="ECO:0007669"/>
    <property type="project" value="UniProtKB-UniRule"/>
</dbReference>
<dbReference type="Gene3D" id="1.20.5.3310">
    <property type="match status" value="1"/>
</dbReference>
<dbReference type="HAMAP" id="MF_00237">
    <property type="entry name" value="TatB"/>
    <property type="match status" value="1"/>
</dbReference>
<dbReference type="InterPro" id="IPR003369">
    <property type="entry name" value="TatA/B/E"/>
</dbReference>
<dbReference type="InterPro" id="IPR018448">
    <property type="entry name" value="TatB"/>
</dbReference>
<dbReference type="NCBIfam" id="TIGR01410">
    <property type="entry name" value="tatB"/>
    <property type="match status" value="1"/>
</dbReference>
<dbReference type="PANTHER" id="PTHR33162">
    <property type="entry name" value="SEC-INDEPENDENT PROTEIN TRANSLOCASE PROTEIN TATA, CHLOROPLASTIC"/>
    <property type="match status" value="1"/>
</dbReference>
<dbReference type="PANTHER" id="PTHR33162:SF1">
    <property type="entry name" value="SEC-INDEPENDENT PROTEIN TRANSLOCASE PROTEIN TATA, CHLOROPLASTIC"/>
    <property type="match status" value="1"/>
</dbReference>
<dbReference type="Pfam" id="PF02416">
    <property type="entry name" value="TatA_B_E"/>
    <property type="match status" value="1"/>
</dbReference>
<dbReference type="PRINTS" id="PR01506">
    <property type="entry name" value="TATBPROTEIN"/>
</dbReference>
<sequence length="228" mass="25025">MFDFGLGELVFVGIIALIVLGPERLPEAARTAGRLIGRLQRFVGSVKQEFDTQIELEELRKAKQEFEAAAAQVRDSLKETGTDMQNSLHDISDGLKPWEKLPEQRTPADFGVDENGNPFPDAANTLSDGISDVMPSERSDTSAEILGDSGQTGSTAEPAETDQDRAWREYLTASAAAPVVQTVEVSYIDTAVETPVPHTTSLRKQAISRKRGLRPKHRAKPKLRVRKS</sequence>
<reference key="1">
    <citation type="journal article" date="2007" name="PLoS Genet.">
        <title>Meningococcal genetic variation mechanisms viewed through comparative analysis of serogroup C strain FAM18.</title>
        <authorList>
            <person name="Bentley S.D."/>
            <person name="Vernikos G.S."/>
            <person name="Snyder L.A.S."/>
            <person name="Churcher C."/>
            <person name="Arrowsmith C."/>
            <person name="Chillingworth T."/>
            <person name="Cronin A."/>
            <person name="Davis P.H."/>
            <person name="Holroyd N.E."/>
            <person name="Jagels K."/>
            <person name="Maddison M."/>
            <person name="Moule S."/>
            <person name="Rabbinowitsch E."/>
            <person name="Sharp S."/>
            <person name="Unwin L."/>
            <person name="Whitehead S."/>
            <person name="Quail M.A."/>
            <person name="Achtman M."/>
            <person name="Barrell B.G."/>
            <person name="Saunders N.J."/>
            <person name="Parkhill J."/>
        </authorList>
    </citation>
    <scope>NUCLEOTIDE SEQUENCE [LARGE SCALE GENOMIC DNA]</scope>
    <source>
        <strain>ATCC 700532 / DSM 15464 / FAM18</strain>
    </source>
</reference>
<evidence type="ECO:0000255" key="1">
    <source>
        <dbReference type="HAMAP-Rule" id="MF_00237"/>
    </source>
</evidence>
<evidence type="ECO:0000256" key="2">
    <source>
        <dbReference type="SAM" id="MobiDB-lite"/>
    </source>
</evidence>
<name>TATB_NEIMF</name>
<protein>
    <recommendedName>
        <fullName evidence="1">Sec-independent protein translocase protein TatB</fullName>
    </recommendedName>
</protein>
<accession>A1KSK9</accession>
<keyword id="KW-0997">Cell inner membrane</keyword>
<keyword id="KW-1003">Cell membrane</keyword>
<keyword id="KW-0472">Membrane</keyword>
<keyword id="KW-0653">Protein transport</keyword>
<keyword id="KW-0811">Translocation</keyword>
<keyword id="KW-0812">Transmembrane</keyword>
<keyword id="KW-1133">Transmembrane helix</keyword>
<keyword id="KW-0813">Transport</keyword>
<gene>
    <name evidence="1" type="primary">tatB</name>
    <name type="ordered locus">NMC0543</name>
</gene>
<proteinExistence type="inferred from homology"/>